<gene>
    <name evidence="1" type="primary">infC</name>
    <name type="ordered locus">BT0190</name>
</gene>
<reference key="1">
    <citation type="submission" date="2004-12" db="EMBL/GenBank/DDBJ databases">
        <title>The genome sequence of Borrelia hermsii and Borrelia turicatae: comparative analysis of two agents of endemic N. America relapsing fever.</title>
        <authorList>
            <person name="Porcella S.F."/>
            <person name="Raffel S.J."/>
            <person name="Schrumpf M.E."/>
            <person name="Montgomery B."/>
            <person name="Smith T."/>
            <person name="Schwan T.G."/>
        </authorList>
    </citation>
    <scope>NUCLEOTIDE SEQUENCE [LARGE SCALE GENOMIC DNA]</scope>
    <source>
        <strain>91E135</strain>
    </source>
</reference>
<dbReference type="EMBL" id="CP000049">
    <property type="protein sequence ID" value="AAX17527.1"/>
    <property type="molecule type" value="Genomic_DNA"/>
</dbReference>
<dbReference type="RefSeq" id="WP_011772146.1">
    <property type="nucleotide sequence ID" value="NC_008710.1"/>
</dbReference>
<dbReference type="SMR" id="A1QYY5"/>
<dbReference type="KEGG" id="btu:BT0190"/>
<dbReference type="eggNOG" id="COG0290">
    <property type="taxonomic scope" value="Bacteria"/>
</dbReference>
<dbReference type="HOGENOM" id="CLU_054919_3_2_12"/>
<dbReference type="Proteomes" id="UP000001205">
    <property type="component" value="Chromosome"/>
</dbReference>
<dbReference type="GO" id="GO:0005829">
    <property type="term" value="C:cytosol"/>
    <property type="evidence" value="ECO:0007669"/>
    <property type="project" value="TreeGrafter"/>
</dbReference>
<dbReference type="GO" id="GO:0016020">
    <property type="term" value="C:membrane"/>
    <property type="evidence" value="ECO:0007669"/>
    <property type="project" value="TreeGrafter"/>
</dbReference>
<dbReference type="GO" id="GO:0043022">
    <property type="term" value="F:ribosome binding"/>
    <property type="evidence" value="ECO:0007669"/>
    <property type="project" value="TreeGrafter"/>
</dbReference>
<dbReference type="GO" id="GO:0003743">
    <property type="term" value="F:translation initiation factor activity"/>
    <property type="evidence" value="ECO:0007669"/>
    <property type="project" value="UniProtKB-UniRule"/>
</dbReference>
<dbReference type="GO" id="GO:0032790">
    <property type="term" value="P:ribosome disassembly"/>
    <property type="evidence" value="ECO:0007669"/>
    <property type="project" value="TreeGrafter"/>
</dbReference>
<dbReference type="FunFam" id="3.10.20.80:FF:000001">
    <property type="entry name" value="Translation initiation factor IF-3"/>
    <property type="match status" value="1"/>
</dbReference>
<dbReference type="FunFam" id="3.30.110.10:FF:000001">
    <property type="entry name" value="Translation initiation factor IF-3"/>
    <property type="match status" value="1"/>
</dbReference>
<dbReference type="Gene3D" id="3.30.110.10">
    <property type="entry name" value="Translation initiation factor 3 (IF-3), C-terminal domain"/>
    <property type="match status" value="1"/>
</dbReference>
<dbReference type="Gene3D" id="3.10.20.80">
    <property type="entry name" value="Translation initiation factor 3 (IF-3), N-terminal domain"/>
    <property type="match status" value="1"/>
</dbReference>
<dbReference type="HAMAP" id="MF_00080">
    <property type="entry name" value="IF_3"/>
    <property type="match status" value="1"/>
</dbReference>
<dbReference type="InterPro" id="IPR036788">
    <property type="entry name" value="T_IF-3_C_sf"/>
</dbReference>
<dbReference type="InterPro" id="IPR036787">
    <property type="entry name" value="T_IF-3_N_sf"/>
</dbReference>
<dbReference type="InterPro" id="IPR019813">
    <property type="entry name" value="Translation_initiation_fac3_CS"/>
</dbReference>
<dbReference type="InterPro" id="IPR001288">
    <property type="entry name" value="Translation_initiation_fac_3"/>
</dbReference>
<dbReference type="InterPro" id="IPR019815">
    <property type="entry name" value="Translation_initiation_fac_3_C"/>
</dbReference>
<dbReference type="InterPro" id="IPR019814">
    <property type="entry name" value="Translation_initiation_fac_3_N"/>
</dbReference>
<dbReference type="NCBIfam" id="TIGR00168">
    <property type="entry name" value="infC"/>
    <property type="match status" value="1"/>
</dbReference>
<dbReference type="PANTHER" id="PTHR10938">
    <property type="entry name" value="TRANSLATION INITIATION FACTOR IF-3"/>
    <property type="match status" value="1"/>
</dbReference>
<dbReference type="PANTHER" id="PTHR10938:SF0">
    <property type="entry name" value="TRANSLATION INITIATION FACTOR IF-3, MITOCHONDRIAL"/>
    <property type="match status" value="1"/>
</dbReference>
<dbReference type="Pfam" id="PF00707">
    <property type="entry name" value="IF3_C"/>
    <property type="match status" value="1"/>
</dbReference>
<dbReference type="Pfam" id="PF05198">
    <property type="entry name" value="IF3_N"/>
    <property type="match status" value="1"/>
</dbReference>
<dbReference type="SUPFAM" id="SSF55200">
    <property type="entry name" value="Translation initiation factor IF3, C-terminal domain"/>
    <property type="match status" value="1"/>
</dbReference>
<dbReference type="SUPFAM" id="SSF54364">
    <property type="entry name" value="Translation initiation factor IF3, N-terminal domain"/>
    <property type="match status" value="1"/>
</dbReference>
<dbReference type="PROSITE" id="PS00938">
    <property type="entry name" value="IF3"/>
    <property type="match status" value="1"/>
</dbReference>
<feature type="chain" id="PRO_1000118261" description="Translation initiation factor IF-3">
    <location>
        <begin position="1"/>
        <end position="186"/>
    </location>
</feature>
<feature type="region of interest" description="Disordered" evidence="2">
    <location>
        <begin position="1"/>
        <end position="21"/>
    </location>
</feature>
<organism>
    <name type="scientific">Borrelia turicatae (strain 91E135)</name>
    <dbReference type="NCBI Taxonomy" id="314724"/>
    <lineage>
        <taxon>Bacteria</taxon>
        <taxon>Pseudomonadati</taxon>
        <taxon>Spirochaetota</taxon>
        <taxon>Spirochaetia</taxon>
        <taxon>Spirochaetales</taxon>
        <taxon>Borreliaceae</taxon>
        <taxon>Borrelia</taxon>
    </lineage>
</organism>
<evidence type="ECO:0000255" key="1">
    <source>
        <dbReference type="HAMAP-Rule" id="MF_00080"/>
    </source>
</evidence>
<evidence type="ECO:0000256" key="2">
    <source>
        <dbReference type="SAM" id="MobiDB-lite"/>
    </source>
</evidence>
<name>IF3_BORT9</name>
<comment type="function">
    <text evidence="1">IF-3 binds to the 30S ribosomal subunit and shifts the equilibrium between 70S ribosomes and their 50S and 30S subunits in favor of the free subunits, thus enhancing the availability of 30S subunits on which protein synthesis initiation begins.</text>
</comment>
<comment type="subunit">
    <text evidence="1">Monomer.</text>
</comment>
<comment type="subcellular location">
    <subcellularLocation>
        <location evidence="1">Cytoplasm</location>
    </subcellularLocation>
</comment>
<comment type="similarity">
    <text evidence="1">Belongs to the IF-3 family.</text>
</comment>
<accession>A1QYY5</accession>
<proteinExistence type="inferred from homology"/>
<protein>
    <recommendedName>
        <fullName evidence="1">Translation initiation factor IF-3</fullName>
    </recommendedName>
</protein>
<keyword id="KW-0963">Cytoplasm</keyword>
<keyword id="KW-0396">Initiation factor</keyword>
<keyword id="KW-0648">Protein biosynthesis</keyword>
<keyword id="KW-1185">Reference proteome</keyword>
<sequence length="186" mass="21573">MINRSSGKDRDRSRSGDKELRINHKIKAREVRVIFDNGTQSVLPIEDAIKCARDAELDLVEISPNSVPPVCKIIDYGKYKFHQEKRQKEQKRNQKIIKLKEVRMQPKIDTHDLDFKYRNILGFLKEGNKVKVTIRFRGRELAHTHLGYGILESILERVGESNYVLESPAKMEGKTMFLIIAPKSKK</sequence>